<geneLocation type="chloroplast"/>
<name>MATK_IRITE</name>
<dbReference type="EMBL" id="AY596647">
    <property type="protein sequence ID" value="AAW67446.1"/>
    <property type="molecule type" value="Genomic_DNA"/>
</dbReference>
<dbReference type="GO" id="GO:0009507">
    <property type="term" value="C:chloroplast"/>
    <property type="evidence" value="ECO:0007669"/>
    <property type="project" value="UniProtKB-SubCell"/>
</dbReference>
<dbReference type="GO" id="GO:0003723">
    <property type="term" value="F:RNA binding"/>
    <property type="evidence" value="ECO:0007669"/>
    <property type="project" value="UniProtKB-KW"/>
</dbReference>
<dbReference type="GO" id="GO:0006397">
    <property type="term" value="P:mRNA processing"/>
    <property type="evidence" value="ECO:0007669"/>
    <property type="project" value="UniProtKB-KW"/>
</dbReference>
<dbReference type="GO" id="GO:0008380">
    <property type="term" value="P:RNA splicing"/>
    <property type="evidence" value="ECO:0007669"/>
    <property type="project" value="UniProtKB-UniRule"/>
</dbReference>
<dbReference type="GO" id="GO:0008033">
    <property type="term" value="P:tRNA processing"/>
    <property type="evidence" value="ECO:0007669"/>
    <property type="project" value="UniProtKB-KW"/>
</dbReference>
<dbReference type="HAMAP" id="MF_01390">
    <property type="entry name" value="MatK"/>
    <property type="match status" value="1"/>
</dbReference>
<dbReference type="InterPro" id="IPR024937">
    <property type="entry name" value="Domain_X"/>
</dbReference>
<dbReference type="InterPro" id="IPR002866">
    <property type="entry name" value="Maturase_MatK"/>
</dbReference>
<dbReference type="InterPro" id="IPR024942">
    <property type="entry name" value="Maturase_MatK_N"/>
</dbReference>
<dbReference type="PANTHER" id="PTHR34811">
    <property type="entry name" value="MATURASE K"/>
    <property type="match status" value="1"/>
</dbReference>
<dbReference type="PANTHER" id="PTHR34811:SF1">
    <property type="entry name" value="MATURASE K"/>
    <property type="match status" value="1"/>
</dbReference>
<dbReference type="Pfam" id="PF01348">
    <property type="entry name" value="Intron_maturas2"/>
    <property type="match status" value="1"/>
</dbReference>
<dbReference type="Pfam" id="PF01824">
    <property type="entry name" value="MatK_N"/>
    <property type="match status" value="1"/>
</dbReference>
<accession>Q5GF59</accession>
<comment type="function">
    <text evidence="1">Usually encoded in the trnK tRNA gene intron. Probably assists in splicing its own and other chloroplast group II introns.</text>
</comment>
<comment type="subcellular location">
    <subcellularLocation>
        <location>Plastid</location>
        <location>Chloroplast</location>
    </subcellularLocation>
</comment>
<comment type="similarity">
    <text evidence="1">Belongs to the intron maturase 2 family. MatK subfamily.</text>
</comment>
<feature type="chain" id="PRO_0000143440" description="Maturase K">
    <location>
        <begin position="1"/>
        <end position="522"/>
    </location>
</feature>
<organism>
    <name type="scientific">Iris tenax</name>
    <name type="common">Oregon iris</name>
    <dbReference type="NCBI Taxonomy" id="34216"/>
    <lineage>
        <taxon>Eukaryota</taxon>
        <taxon>Viridiplantae</taxon>
        <taxon>Streptophyta</taxon>
        <taxon>Embryophyta</taxon>
        <taxon>Tracheophyta</taxon>
        <taxon>Spermatophyta</taxon>
        <taxon>Magnoliopsida</taxon>
        <taxon>Liliopsida</taxon>
        <taxon>Asparagales</taxon>
        <taxon>Iridaceae</taxon>
        <taxon>Iridoideae</taxon>
        <taxon>Irideae</taxon>
        <taxon>Iris</taxon>
    </lineage>
</organism>
<evidence type="ECO:0000255" key="1">
    <source>
        <dbReference type="HAMAP-Rule" id="MF_01390"/>
    </source>
</evidence>
<proteinExistence type="inferred from homology"/>
<sequence>MEELQGYLEKDRSRQQPFLYPLLFQEYIYALAHNRGLKGSLFYEPTEVFGYDSKSSLALVKRLIIRIYQQNDFLSVVNDSNKNRFVSHHRDNFCYSHFYSQMISEGFAILVEIPFSPRLVSYFEKKEIPKSHNLRSIHSIFPFLEDKLLHLNYVSDILIPHPIHMEILVQILQCWIQDVPLLHFLRFFLHKYHNWNSFLITPKKSIFVFSKENKRLFRFLYNSYVSECEFLLVFLRKQSSYLRLTSFGFFLERRHFYVKIERLQMQHLILIVVCRDFFQGTLWSFKDPFMHYVRCQGKAVLASKGTHLLMKKWKYNFVNLWQYYFNFWYQSYRIHINQLSNYSFYFLGYLSSLLKNSSTVRNQMLENSFLIDTVTNKLETLVPVIFLIGSLXKVQFCTVSGHPISKPIWADLSDSEIIERFGRMCRNLSHYHSGSSKKQGLYRIKYILRLSCARTLARKHKSTGRTFLRRLGSGLLEEFFTEEEQVLSLILPKKIPFTFYGSHKERIWYLDIIRINDLVNHS</sequence>
<reference key="1">
    <citation type="journal article" date="2004" name="Mol. Phylogenet. Evol.">
        <title>Phylogeny of Iris based on chloroplast matK gene and trnK intron sequence data.</title>
        <authorList>
            <person name="Wilson C.A."/>
        </authorList>
    </citation>
    <scope>NUCLEOTIDE SEQUENCE [GENOMIC DNA]</scope>
</reference>
<keyword id="KW-0150">Chloroplast</keyword>
<keyword id="KW-0507">mRNA processing</keyword>
<keyword id="KW-0934">Plastid</keyword>
<keyword id="KW-0694">RNA-binding</keyword>
<keyword id="KW-0819">tRNA processing</keyword>
<gene>
    <name evidence="1" type="primary">matK</name>
</gene>
<protein>
    <recommendedName>
        <fullName evidence="1">Maturase K</fullName>
    </recommendedName>
    <alternativeName>
        <fullName evidence="1">Intron maturase</fullName>
    </alternativeName>
</protein>